<proteinExistence type="predicted"/>
<organism>
    <name type="scientific">Caenorhabditis elegans</name>
    <dbReference type="NCBI Taxonomy" id="6239"/>
    <lineage>
        <taxon>Eukaryota</taxon>
        <taxon>Metazoa</taxon>
        <taxon>Ecdysozoa</taxon>
        <taxon>Nematoda</taxon>
        <taxon>Chromadorea</taxon>
        <taxon>Rhabditida</taxon>
        <taxon>Rhabditina</taxon>
        <taxon>Rhabditomorpha</taxon>
        <taxon>Rhabditoidea</taxon>
        <taxon>Rhabditidae</taxon>
        <taxon>Peloderinae</taxon>
        <taxon>Caenorhabditis</taxon>
    </lineage>
</organism>
<name>YSV3_CAEEL</name>
<keyword id="KW-1185">Reference proteome</keyword>
<gene>
    <name type="ORF">T19C3.3</name>
</gene>
<evidence type="ECO:0000256" key="1">
    <source>
        <dbReference type="SAM" id="MobiDB-lite"/>
    </source>
</evidence>
<dbReference type="EMBL" id="FO081735">
    <property type="protein sequence ID" value="CCD73735.1"/>
    <property type="molecule type" value="Genomic_DNA"/>
</dbReference>
<dbReference type="PIR" id="T16886">
    <property type="entry name" value="T16886"/>
</dbReference>
<dbReference type="RefSeq" id="NP_497219.2">
    <property type="nucleotide sequence ID" value="NM_064818.4"/>
</dbReference>
<dbReference type="BioGRID" id="53247">
    <property type="interactions" value="3"/>
</dbReference>
<dbReference type="FunCoup" id="Q10009">
    <property type="interactions" value="71"/>
</dbReference>
<dbReference type="iPTMnet" id="Q10009"/>
<dbReference type="PaxDb" id="6239-T19C3.3"/>
<dbReference type="PeptideAtlas" id="Q10009"/>
<dbReference type="EnsemblMetazoa" id="T19C3.3.1">
    <property type="protein sequence ID" value="T19C3.3.1"/>
    <property type="gene ID" value="WBGene00020561"/>
</dbReference>
<dbReference type="GeneID" id="188586"/>
<dbReference type="KEGG" id="cel:CELE_T19C3.3"/>
<dbReference type="UCSC" id="T19C3.3">
    <property type="organism name" value="c. elegans"/>
</dbReference>
<dbReference type="AGR" id="WB:WBGene00020561"/>
<dbReference type="CTD" id="188586"/>
<dbReference type="WormBase" id="T19C3.3">
    <property type="protein sequence ID" value="CE30183"/>
    <property type="gene ID" value="WBGene00020561"/>
</dbReference>
<dbReference type="eggNOG" id="KOG3547">
    <property type="taxonomic scope" value="Eukaryota"/>
</dbReference>
<dbReference type="HOGENOM" id="CLU_2388181_0_0_1"/>
<dbReference type="InParanoid" id="Q10009"/>
<dbReference type="OMA" id="CNTRDRL"/>
<dbReference type="OrthoDB" id="5790345at2759"/>
<dbReference type="PRO" id="PR:Q10009"/>
<dbReference type="Proteomes" id="UP000001940">
    <property type="component" value="Chromosome III"/>
</dbReference>
<dbReference type="Bgee" id="WBGene00020561">
    <property type="expression patterns" value="Expressed in pharyngeal muscle cell (C elegans) and 3 other cell types or tissues"/>
</dbReference>
<protein>
    <recommendedName>
        <fullName>Uncharacterized protein T19C3.3</fullName>
    </recommendedName>
</protein>
<sequence>MSDAAAPAQAPAPPTHAPLTPHKHCNTRDRLFGQDPPAVASPKRVTPTFKSQIFDDVPASPSRTPKRTVQVVSRNPVTGEIKPSPSQQQVAA</sequence>
<feature type="chain" id="PRO_0000065470" description="Uncharacterized protein T19C3.3">
    <location>
        <begin position="1"/>
        <end position="92"/>
    </location>
</feature>
<feature type="region of interest" description="Disordered" evidence="1">
    <location>
        <begin position="1"/>
        <end position="92"/>
    </location>
</feature>
<accession>Q10009</accession>
<reference key="1">
    <citation type="journal article" date="1998" name="Science">
        <title>Genome sequence of the nematode C. elegans: a platform for investigating biology.</title>
        <authorList>
            <consortium name="The C. elegans sequencing consortium"/>
        </authorList>
    </citation>
    <scope>NUCLEOTIDE SEQUENCE [LARGE SCALE GENOMIC DNA]</scope>
    <source>
        <strain>Bristol N2</strain>
    </source>
</reference>